<feature type="chain" id="PRO_0000198929" description="Rac-like GTP-binding protein RAC1">
    <location>
        <begin position="1"/>
        <end position="194"/>
    </location>
</feature>
<feature type="propeptide" id="PRO_0000227591" description="Removed in mature form" evidence="2">
    <location>
        <begin position="195"/>
        <end position="197"/>
    </location>
</feature>
<feature type="short sequence motif" description="Effector region" evidence="2">
    <location>
        <begin position="35"/>
        <end position="43"/>
    </location>
</feature>
<feature type="binding site" evidence="1">
    <location>
        <begin position="13"/>
        <end position="20"/>
    </location>
    <ligand>
        <name>GTP</name>
        <dbReference type="ChEBI" id="CHEBI:37565"/>
    </ligand>
</feature>
<feature type="binding site" evidence="1">
    <location>
        <begin position="60"/>
        <end position="64"/>
    </location>
    <ligand>
        <name>GTP</name>
        <dbReference type="ChEBI" id="CHEBI:37565"/>
    </ligand>
</feature>
<feature type="binding site" evidence="1">
    <location>
        <begin position="118"/>
        <end position="121"/>
    </location>
    <ligand>
        <name>GTP</name>
        <dbReference type="ChEBI" id="CHEBI:37565"/>
    </ligand>
</feature>
<feature type="modified residue" description="Cysteine methyl ester" evidence="2">
    <location>
        <position position="194"/>
    </location>
</feature>
<feature type="lipid moiety-binding region" description="S-geranylgeranyl cysteine" evidence="2">
    <location>
        <position position="194"/>
    </location>
</feature>
<comment type="function">
    <text evidence="1">Inactive GDP-bound Rho GTPases reside in the cytosol, are found in a complex with Rho GDP-dissociation inhibitors (Rho GDIs), and are released from the GDI protein in order to translocate to membranes upon activation.</text>
</comment>
<comment type="subcellular location">
    <subcellularLocation>
        <location evidence="1">Cytoplasm</location>
    </subcellularLocation>
    <subcellularLocation>
        <location evidence="1">Membrane</location>
        <topology evidence="1">Peripheral membrane protein</topology>
    </subcellularLocation>
    <text>Associated with the membrane when activated.</text>
</comment>
<comment type="similarity">
    <text evidence="3">Belongs to the small GTPase superfamily. Rho family.</text>
</comment>
<evidence type="ECO:0000250" key="1"/>
<evidence type="ECO:0000255" key="2"/>
<evidence type="ECO:0000305" key="3"/>
<gene>
    <name type="primary">RAC1</name>
</gene>
<organism>
    <name type="scientific">Lotus japonicus</name>
    <name type="common">Lotus corniculatus var. japonicus</name>
    <dbReference type="NCBI Taxonomy" id="34305"/>
    <lineage>
        <taxon>Eukaryota</taxon>
        <taxon>Viridiplantae</taxon>
        <taxon>Streptophyta</taxon>
        <taxon>Embryophyta</taxon>
        <taxon>Tracheophyta</taxon>
        <taxon>Spermatophyta</taxon>
        <taxon>Magnoliopsida</taxon>
        <taxon>eudicotyledons</taxon>
        <taxon>Gunneridae</taxon>
        <taxon>Pentapetalae</taxon>
        <taxon>rosids</taxon>
        <taxon>fabids</taxon>
        <taxon>Fabales</taxon>
        <taxon>Fabaceae</taxon>
        <taxon>Papilionoideae</taxon>
        <taxon>50 kb inversion clade</taxon>
        <taxon>NPAAA clade</taxon>
        <taxon>Hologalegina</taxon>
        <taxon>robinioid clade</taxon>
        <taxon>Loteae</taxon>
        <taxon>Lotus</taxon>
    </lineage>
</organism>
<dbReference type="EMBL" id="Z73961">
    <property type="protein sequence ID" value="CAA98189.1"/>
    <property type="molecule type" value="mRNA"/>
</dbReference>
<dbReference type="SMR" id="O04369"/>
<dbReference type="GO" id="GO:0005737">
    <property type="term" value="C:cytoplasm"/>
    <property type="evidence" value="ECO:0007669"/>
    <property type="project" value="UniProtKB-SubCell"/>
</dbReference>
<dbReference type="GO" id="GO:0016020">
    <property type="term" value="C:membrane"/>
    <property type="evidence" value="ECO:0007669"/>
    <property type="project" value="UniProtKB-SubCell"/>
</dbReference>
<dbReference type="GO" id="GO:0005525">
    <property type="term" value="F:GTP binding"/>
    <property type="evidence" value="ECO:0007669"/>
    <property type="project" value="UniProtKB-KW"/>
</dbReference>
<dbReference type="GO" id="GO:0003924">
    <property type="term" value="F:GTPase activity"/>
    <property type="evidence" value="ECO:0007669"/>
    <property type="project" value="InterPro"/>
</dbReference>
<dbReference type="GO" id="GO:0007264">
    <property type="term" value="P:small GTPase-mediated signal transduction"/>
    <property type="evidence" value="ECO:0007669"/>
    <property type="project" value="InterPro"/>
</dbReference>
<dbReference type="CDD" id="cd04133">
    <property type="entry name" value="Rop_like"/>
    <property type="match status" value="1"/>
</dbReference>
<dbReference type="FunFam" id="3.40.50.300:FF:000336">
    <property type="entry name" value="rac-like GTP-binding protein RHO1"/>
    <property type="match status" value="1"/>
</dbReference>
<dbReference type="Gene3D" id="3.40.50.300">
    <property type="entry name" value="P-loop containing nucleotide triphosphate hydrolases"/>
    <property type="match status" value="1"/>
</dbReference>
<dbReference type="InterPro" id="IPR027417">
    <property type="entry name" value="P-loop_NTPase"/>
</dbReference>
<dbReference type="InterPro" id="IPR005225">
    <property type="entry name" value="Small_GTP-bd"/>
</dbReference>
<dbReference type="InterPro" id="IPR001806">
    <property type="entry name" value="Small_GTPase"/>
</dbReference>
<dbReference type="InterPro" id="IPR003578">
    <property type="entry name" value="Small_GTPase_Rho"/>
</dbReference>
<dbReference type="NCBIfam" id="TIGR00231">
    <property type="entry name" value="small_GTP"/>
    <property type="match status" value="1"/>
</dbReference>
<dbReference type="PANTHER" id="PTHR24072">
    <property type="entry name" value="RHO FAMILY GTPASE"/>
    <property type="match status" value="1"/>
</dbReference>
<dbReference type="Pfam" id="PF00071">
    <property type="entry name" value="Ras"/>
    <property type="match status" value="1"/>
</dbReference>
<dbReference type="PRINTS" id="PR00449">
    <property type="entry name" value="RASTRNSFRMNG"/>
</dbReference>
<dbReference type="SMART" id="SM00175">
    <property type="entry name" value="RAB"/>
    <property type="match status" value="1"/>
</dbReference>
<dbReference type="SMART" id="SM00173">
    <property type="entry name" value="RAS"/>
    <property type="match status" value="1"/>
</dbReference>
<dbReference type="SMART" id="SM00174">
    <property type="entry name" value="RHO"/>
    <property type="match status" value="1"/>
</dbReference>
<dbReference type="SUPFAM" id="SSF52540">
    <property type="entry name" value="P-loop containing nucleoside triphosphate hydrolases"/>
    <property type="match status" value="1"/>
</dbReference>
<dbReference type="PROSITE" id="PS51420">
    <property type="entry name" value="RHO"/>
    <property type="match status" value="1"/>
</dbReference>
<sequence>MSASRFIKCVTVGDGAVGKTCLLISYTSNTFPTDYVPTVFDNFSANVVVDGSTVNLGLWDTAGQEDYNRLRPLSYRGADVFILAFSLISKASYENIAKKWIPELRHYAPGVPIILVGTKLDLRDDKHFLADHPGAVPITTAQGEELRKLIGAPAYIECSSKTQQNVKAVFDAAIKVVLQPPKQKKKKREAQKSCSIL</sequence>
<name>RAC1_LOTJA</name>
<accession>O04369</accession>
<proteinExistence type="evidence at transcript level"/>
<keyword id="KW-0963">Cytoplasm</keyword>
<keyword id="KW-0342">GTP-binding</keyword>
<keyword id="KW-0449">Lipoprotein</keyword>
<keyword id="KW-0472">Membrane</keyword>
<keyword id="KW-0488">Methylation</keyword>
<keyword id="KW-0547">Nucleotide-binding</keyword>
<keyword id="KW-0636">Prenylation</keyword>
<reference key="1">
    <citation type="journal article" date="1997" name="Plant J.">
        <title>Identification of new protein species among 33 different small GTP-binding proteins encoded by cDNAs from Lotus japonicus, and expression of corresponding mRNAs in developing root nodules.</title>
        <authorList>
            <person name="Borg S."/>
            <person name="Brandstrup B."/>
            <person name="Jensen T.J."/>
            <person name="Poulsen C."/>
        </authorList>
    </citation>
    <scope>NUCLEOTIDE SEQUENCE [MRNA]</scope>
    <source>
        <strain>cv. Gifu / B-129</strain>
        <tissue>Root nodule</tissue>
    </source>
</reference>
<protein>
    <recommendedName>
        <fullName>Rac-like GTP-binding protein RAC1</fullName>
    </recommendedName>
</protein>